<protein>
    <recommendedName>
        <fullName evidence="1">UDP-3-O-acylglucosamine N-acyltransferase</fullName>
        <ecNumber evidence="1">2.3.1.191</ecNumber>
    </recommendedName>
</protein>
<keyword id="KW-0012">Acyltransferase</keyword>
<keyword id="KW-0441">Lipid A biosynthesis</keyword>
<keyword id="KW-0444">Lipid biosynthesis</keyword>
<keyword id="KW-0443">Lipid metabolism</keyword>
<keyword id="KW-0677">Repeat</keyword>
<keyword id="KW-0808">Transferase</keyword>
<feature type="chain" id="PRO_1000050954" description="UDP-3-O-acylglucosamine N-acyltransferase">
    <location>
        <begin position="1"/>
        <end position="351"/>
    </location>
</feature>
<feature type="active site" description="Proton acceptor" evidence="1">
    <location>
        <position position="240"/>
    </location>
</feature>
<proteinExistence type="inferred from homology"/>
<gene>
    <name evidence="1" type="primary">lpxD</name>
    <name type="ordered locus">Pput_4176</name>
</gene>
<name>LPXD_PSEP1</name>
<evidence type="ECO:0000255" key="1">
    <source>
        <dbReference type="HAMAP-Rule" id="MF_00523"/>
    </source>
</evidence>
<accession>A5W840</accession>
<dbReference type="EC" id="2.3.1.191" evidence="1"/>
<dbReference type="EMBL" id="CP000712">
    <property type="protein sequence ID" value="ABQ80300.1"/>
    <property type="molecule type" value="Genomic_DNA"/>
</dbReference>
<dbReference type="SMR" id="A5W840"/>
<dbReference type="KEGG" id="ppf:Pput_4176"/>
<dbReference type="eggNOG" id="COG1044">
    <property type="taxonomic scope" value="Bacteria"/>
</dbReference>
<dbReference type="HOGENOM" id="CLU_049865_0_1_6"/>
<dbReference type="UniPathway" id="UPA00973"/>
<dbReference type="GO" id="GO:0016020">
    <property type="term" value="C:membrane"/>
    <property type="evidence" value="ECO:0007669"/>
    <property type="project" value="GOC"/>
</dbReference>
<dbReference type="GO" id="GO:0016410">
    <property type="term" value="F:N-acyltransferase activity"/>
    <property type="evidence" value="ECO:0007669"/>
    <property type="project" value="InterPro"/>
</dbReference>
<dbReference type="GO" id="GO:0009245">
    <property type="term" value="P:lipid A biosynthetic process"/>
    <property type="evidence" value="ECO:0007669"/>
    <property type="project" value="UniProtKB-UniRule"/>
</dbReference>
<dbReference type="CDD" id="cd03352">
    <property type="entry name" value="LbH_LpxD"/>
    <property type="match status" value="1"/>
</dbReference>
<dbReference type="Gene3D" id="1.20.5.170">
    <property type="match status" value="1"/>
</dbReference>
<dbReference type="Gene3D" id="2.160.10.10">
    <property type="entry name" value="Hexapeptide repeat proteins"/>
    <property type="match status" value="1"/>
</dbReference>
<dbReference type="Gene3D" id="3.40.1390.10">
    <property type="entry name" value="MurE/MurF, N-terminal domain"/>
    <property type="match status" value="1"/>
</dbReference>
<dbReference type="HAMAP" id="MF_00523">
    <property type="entry name" value="LpxD"/>
    <property type="match status" value="1"/>
</dbReference>
<dbReference type="InterPro" id="IPR001451">
    <property type="entry name" value="Hexapep"/>
</dbReference>
<dbReference type="InterPro" id="IPR018357">
    <property type="entry name" value="Hexapep_transf_CS"/>
</dbReference>
<dbReference type="InterPro" id="IPR007691">
    <property type="entry name" value="LpxD"/>
</dbReference>
<dbReference type="InterPro" id="IPR011004">
    <property type="entry name" value="Trimer_LpxA-like_sf"/>
</dbReference>
<dbReference type="InterPro" id="IPR020573">
    <property type="entry name" value="UDP_GlcNAc_AcTrfase_non-rep"/>
</dbReference>
<dbReference type="NCBIfam" id="TIGR01853">
    <property type="entry name" value="lipid_A_lpxD"/>
    <property type="match status" value="1"/>
</dbReference>
<dbReference type="NCBIfam" id="NF002060">
    <property type="entry name" value="PRK00892.1"/>
    <property type="match status" value="1"/>
</dbReference>
<dbReference type="PANTHER" id="PTHR43378">
    <property type="entry name" value="UDP-3-O-ACYLGLUCOSAMINE N-ACYLTRANSFERASE"/>
    <property type="match status" value="1"/>
</dbReference>
<dbReference type="PANTHER" id="PTHR43378:SF2">
    <property type="entry name" value="UDP-3-O-ACYLGLUCOSAMINE N-ACYLTRANSFERASE 1, MITOCHONDRIAL-RELATED"/>
    <property type="match status" value="1"/>
</dbReference>
<dbReference type="Pfam" id="PF00132">
    <property type="entry name" value="Hexapep"/>
    <property type="match status" value="3"/>
</dbReference>
<dbReference type="Pfam" id="PF04613">
    <property type="entry name" value="LpxD"/>
    <property type="match status" value="1"/>
</dbReference>
<dbReference type="SUPFAM" id="SSF51161">
    <property type="entry name" value="Trimeric LpxA-like enzymes"/>
    <property type="match status" value="1"/>
</dbReference>
<dbReference type="PROSITE" id="PS00101">
    <property type="entry name" value="HEXAPEP_TRANSFERASES"/>
    <property type="match status" value="1"/>
</dbReference>
<organism>
    <name type="scientific">Pseudomonas putida (strain ATCC 700007 / DSM 6899 / JCM 31910 / BCRC 17059 / LMG 24140 / F1)</name>
    <dbReference type="NCBI Taxonomy" id="351746"/>
    <lineage>
        <taxon>Bacteria</taxon>
        <taxon>Pseudomonadati</taxon>
        <taxon>Pseudomonadota</taxon>
        <taxon>Gammaproteobacteria</taxon>
        <taxon>Pseudomonadales</taxon>
        <taxon>Pseudomonadaceae</taxon>
        <taxon>Pseudomonas</taxon>
    </lineage>
</organism>
<sequence length="351" mass="36469">MSVTMTLGQLAEVLGATLKGPEALQITGLATLQEAGPTQLSFLANPQYRKYLDNSQAGAVLLKAADAEGFAGNTLVVADPYLAYARISHLFDPKPKAEAGIHPSAVVAEDAQVDASASIGPFAVIESGARIGANVSIGAHCFIGARCVVGEGGWLAPRVTLYHDVTIGKRVVIQSGAVIGGEGFGFANEKGIWRKIAQIGGVTIGDDVEIGVNTAIDRGALSDTRIGDGVKLDNQIQIAHNVQIGDHTAMAACVGISGSTRIGKHCMLAGGVGLVGHIDICDNVFVSGMTMVTRSITEPGSYSSGTAMQPLADWRKSAARIRHLDDMAKRLQQLEKRVDTVTSGGLPTSEG</sequence>
<comment type="function">
    <text evidence="1">Catalyzes the N-acylation of UDP-3-O-acylglucosamine using 3-hydroxyacyl-ACP as the acyl donor. Is involved in the biosynthesis of lipid A, a phosphorylated glycolipid that anchors the lipopolysaccharide to the outer membrane of the cell.</text>
</comment>
<comment type="catalytic activity">
    <reaction evidence="1">
        <text>a UDP-3-O-[(3R)-3-hydroxyacyl]-alpha-D-glucosamine + a (3R)-hydroxyacyl-[ACP] = a UDP-2-N,3-O-bis[(3R)-3-hydroxyacyl]-alpha-D-glucosamine + holo-[ACP] + H(+)</text>
        <dbReference type="Rhea" id="RHEA:53836"/>
        <dbReference type="Rhea" id="RHEA-COMP:9685"/>
        <dbReference type="Rhea" id="RHEA-COMP:9945"/>
        <dbReference type="ChEBI" id="CHEBI:15378"/>
        <dbReference type="ChEBI" id="CHEBI:64479"/>
        <dbReference type="ChEBI" id="CHEBI:78827"/>
        <dbReference type="ChEBI" id="CHEBI:137740"/>
        <dbReference type="ChEBI" id="CHEBI:137748"/>
        <dbReference type="EC" id="2.3.1.191"/>
    </reaction>
</comment>
<comment type="pathway">
    <text evidence="1">Bacterial outer membrane biogenesis; LPS lipid A biosynthesis.</text>
</comment>
<comment type="subunit">
    <text evidence="1">Homotrimer.</text>
</comment>
<comment type="similarity">
    <text evidence="1">Belongs to the transferase hexapeptide repeat family. LpxD subfamily.</text>
</comment>
<reference key="1">
    <citation type="submission" date="2007-05" db="EMBL/GenBank/DDBJ databases">
        <title>Complete sequence of Pseudomonas putida F1.</title>
        <authorList>
            <consortium name="US DOE Joint Genome Institute"/>
            <person name="Copeland A."/>
            <person name="Lucas S."/>
            <person name="Lapidus A."/>
            <person name="Barry K."/>
            <person name="Detter J.C."/>
            <person name="Glavina del Rio T."/>
            <person name="Hammon N."/>
            <person name="Israni S."/>
            <person name="Dalin E."/>
            <person name="Tice H."/>
            <person name="Pitluck S."/>
            <person name="Chain P."/>
            <person name="Malfatti S."/>
            <person name="Shin M."/>
            <person name="Vergez L."/>
            <person name="Schmutz J."/>
            <person name="Larimer F."/>
            <person name="Land M."/>
            <person name="Hauser L."/>
            <person name="Kyrpides N."/>
            <person name="Lykidis A."/>
            <person name="Parales R."/>
            <person name="Richardson P."/>
        </authorList>
    </citation>
    <scope>NUCLEOTIDE SEQUENCE [LARGE SCALE GENOMIC DNA]</scope>
    <source>
        <strain>ATCC 700007 / DSM 6899 / JCM 31910 / BCRC 17059 / LMG 24140 / F1</strain>
    </source>
</reference>